<proteinExistence type="inferred from homology"/>
<dbReference type="EC" id="7.1.1.-"/>
<dbReference type="EMBL" id="AE013218">
    <property type="protein sequence ID" value="AAM67726.1"/>
    <property type="molecule type" value="Genomic_DNA"/>
</dbReference>
<dbReference type="RefSeq" id="WP_011053693.1">
    <property type="nucleotide sequence ID" value="NC_004061.1"/>
</dbReference>
<dbReference type="SMR" id="Q8K9X6"/>
<dbReference type="STRING" id="198804.BUsg_158"/>
<dbReference type="GeneID" id="93003628"/>
<dbReference type="KEGG" id="bas:BUsg_158"/>
<dbReference type="eggNOG" id="COG1008">
    <property type="taxonomic scope" value="Bacteria"/>
</dbReference>
<dbReference type="HOGENOM" id="CLU_007100_4_4_6"/>
<dbReference type="Proteomes" id="UP000000416">
    <property type="component" value="Chromosome"/>
</dbReference>
<dbReference type="GO" id="GO:0005886">
    <property type="term" value="C:plasma membrane"/>
    <property type="evidence" value="ECO:0007669"/>
    <property type="project" value="UniProtKB-SubCell"/>
</dbReference>
<dbReference type="GO" id="GO:0008137">
    <property type="term" value="F:NADH dehydrogenase (ubiquinone) activity"/>
    <property type="evidence" value="ECO:0007669"/>
    <property type="project" value="InterPro"/>
</dbReference>
<dbReference type="GO" id="GO:0048039">
    <property type="term" value="F:ubiquinone binding"/>
    <property type="evidence" value="ECO:0007669"/>
    <property type="project" value="TreeGrafter"/>
</dbReference>
<dbReference type="GO" id="GO:0042773">
    <property type="term" value="P:ATP synthesis coupled electron transport"/>
    <property type="evidence" value="ECO:0007669"/>
    <property type="project" value="InterPro"/>
</dbReference>
<dbReference type="GO" id="GO:0015990">
    <property type="term" value="P:electron transport coupled proton transport"/>
    <property type="evidence" value="ECO:0007669"/>
    <property type="project" value="TreeGrafter"/>
</dbReference>
<dbReference type="InterPro" id="IPR010227">
    <property type="entry name" value="NADH_Q_OxRdtase_chainM/4"/>
</dbReference>
<dbReference type="InterPro" id="IPR003918">
    <property type="entry name" value="NADH_UbQ_OxRdtase"/>
</dbReference>
<dbReference type="InterPro" id="IPR001750">
    <property type="entry name" value="ND/Mrp_TM"/>
</dbReference>
<dbReference type="NCBIfam" id="TIGR01972">
    <property type="entry name" value="NDH_I_M"/>
    <property type="match status" value="1"/>
</dbReference>
<dbReference type="NCBIfam" id="NF004498">
    <property type="entry name" value="PRK05846.1-1"/>
    <property type="match status" value="1"/>
</dbReference>
<dbReference type="PANTHER" id="PTHR43507">
    <property type="entry name" value="NADH-UBIQUINONE OXIDOREDUCTASE CHAIN 4"/>
    <property type="match status" value="1"/>
</dbReference>
<dbReference type="PANTHER" id="PTHR43507:SF1">
    <property type="entry name" value="NADH-UBIQUINONE OXIDOREDUCTASE CHAIN 4"/>
    <property type="match status" value="1"/>
</dbReference>
<dbReference type="Pfam" id="PF00361">
    <property type="entry name" value="Proton_antipo_M"/>
    <property type="match status" value="1"/>
</dbReference>
<dbReference type="PRINTS" id="PR01437">
    <property type="entry name" value="NUOXDRDTASE4"/>
</dbReference>
<organism>
    <name type="scientific">Buchnera aphidicola subsp. Schizaphis graminum (strain Sg)</name>
    <dbReference type="NCBI Taxonomy" id="198804"/>
    <lineage>
        <taxon>Bacteria</taxon>
        <taxon>Pseudomonadati</taxon>
        <taxon>Pseudomonadota</taxon>
        <taxon>Gammaproteobacteria</taxon>
        <taxon>Enterobacterales</taxon>
        <taxon>Erwiniaceae</taxon>
        <taxon>Buchnera</taxon>
    </lineage>
</organism>
<protein>
    <recommendedName>
        <fullName>NADH-quinone oxidoreductase subunit M</fullName>
        <ecNumber>7.1.1.-</ecNumber>
    </recommendedName>
    <alternativeName>
        <fullName>NADH dehydrogenase I subunit M</fullName>
    </alternativeName>
    <alternativeName>
        <fullName>NDH-1 subunit M</fullName>
    </alternativeName>
</protein>
<comment type="function">
    <text evidence="1">NDH-1 shuttles electrons from NADH, via FMN and iron-sulfur (Fe-S) centers, to quinones in the respiratory chain. Couples the redox reaction to proton translocation (for every two electrons transferred, four hydrogen ions are translocated across the cytoplasmic membrane), and thus conserves the redox energy in a proton gradient (By similarity).</text>
</comment>
<comment type="catalytic activity">
    <reaction>
        <text>a quinone + NADH + 5 H(+)(in) = a quinol + NAD(+) + 4 H(+)(out)</text>
        <dbReference type="Rhea" id="RHEA:57888"/>
        <dbReference type="ChEBI" id="CHEBI:15378"/>
        <dbReference type="ChEBI" id="CHEBI:24646"/>
        <dbReference type="ChEBI" id="CHEBI:57540"/>
        <dbReference type="ChEBI" id="CHEBI:57945"/>
        <dbReference type="ChEBI" id="CHEBI:132124"/>
    </reaction>
</comment>
<comment type="subunit">
    <text evidence="1">Composed of 13 different subunits. Subunits NuoA, H, J, K, L, M, N constitute the membrane sector of the complex (By similarity).</text>
</comment>
<comment type="subcellular location">
    <subcellularLocation>
        <location evidence="3">Cell membrane</location>
        <topology evidence="3">Multi-pass membrane protein</topology>
    </subcellularLocation>
</comment>
<comment type="similarity">
    <text evidence="3">Belongs to the complex I subunit 4 family.</text>
</comment>
<gene>
    <name type="primary">nuoM</name>
    <name type="ordered locus">BUsg_158</name>
</gene>
<accession>Q8K9X6</accession>
<feature type="chain" id="PRO_0000118042" description="NADH-quinone oxidoreductase subunit M">
    <location>
        <begin position="1"/>
        <end position="501"/>
    </location>
</feature>
<feature type="transmembrane region" description="Helical" evidence="2">
    <location>
        <begin position="1"/>
        <end position="21"/>
    </location>
</feature>
<feature type="transmembrane region" description="Helical" evidence="2">
    <location>
        <begin position="30"/>
        <end position="50"/>
    </location>
</feature>
<feature type="transmembrane region" description="Helical" evidence="2">
    <location>
        <begin position="86"/>
        <end position="106"/>
    </location>
</feature>
<feature type="transmembrane region" description="Helical" evidence="2">
    <location>
        <begin position="115"/>
        <end position="134"/>
    </location>
</feature>
<feature type="transmembrane region" description="Helical" evidence="2">
    <location>
        <begin position="139"/>
        <end position="156"/>
    </location>
</feature>
<feature type="transmembrane region" description="Helical" evidence="2">
    <location>
        <begin position="174"/>
        <end position="194"/>
    </location>
</feature>
<feature type="transmembrane region" description="Helical" evidence="2">
    <location>
        <begin position="222"/>
        <end position="242"/>
    </location>
</feature>
<feature type="transmembrane region" description="Helical" evidence="2">
    <location>
        <begin position="252"/>
        <end position="272"/>
    </location>
</feature>
<feature type="transmembrane region" description="Helical" evidence="2">
    <location>
        <begin position="286"/>
        <end position="306"/>
    </location>
</feature>
<feature type="transmembrane region" description="Helical" evidence="2">
    <location>
        <begin position="314"/>
        <end position="331"/>
    </location>
</feature>
<feature type="transmembrane region" description="Helical" evidence="2">
    <location>
        <begin position="341"/>
        <end position="363"/>
    </location>
</feature>
<feature type="transmembrane region" description="Helical" evidence="2">
    <location>
        <begin position="374"/>
        <end position="394"/>
    </location>
</feature>
<feature type="transmembrane region" description="Helical" evidence="2">
    <location>
        <begin position="420"/>
        <end position="440"/>
    </location>
</feature>
<feature type="transmembrane region" description="Helical" evidence="2">
    <location>
        <begin position="459"/>
        <end position="479"/>
    </location>
</feature>
<sequence length="501" mass="57884">MLLSLLVIIPFLSGIFSFFSFRFQKNIPRWIALTGMGLTLLTVIRIWFFEDYYTYQIQSYTHLSYQLILPWISSFGIQFHIAVDGFSIVMLFLTLFLGIIAILCSWNEIKKNEGFFYLNIMLVLMGTIGVFIAFDLFLFFFFWEIILIPMYFLISLWNQKKEDKKKCINIANKFFIYTQISGLIMLASILLLVLNYYINNKILTFNYDLLLIQPVDKSIEYIIMLGFFLAFIIKMPIVPFHGWLADFHERSPYCGAVDIIGALLKTAPYGLLRYNKMLFPNATEQFAPIAIFLGFLSMFYGAWVAFSQVNIKRLIAYSSISHMGLMLIAIYGGNEISFQGLIIQILSNSISTSALFILSGQIYKYLKTQDISEMGGLWTNIYWIPGFSLFFALSNLGIPGTGNFIGEFLILFGIFKEHPLVSIISTIGIIFSSIYSLNMIQKIYYGLSKHDFPKFFLNIKEFWISIVLIFALIFLGLIPQKILNISFESIHFIYNFSKRIQ</sequence>
<name>NUOM_BUCAP</name>
<keyword id="KW-1003">Cell membrane</keyword>
<keyword id="KW-0472">Membrane</keyword>
<keyword id="KW-0520">NAD</keyword>
<keyword id="KW-0874">Quinone</keyword>
<keyword id="KW-1278">Translocase</keyword>
<keyword id="KW-0812">Transmembrane</keyword>
<keyword id="KW-1133">Transmembrane helix</keyword>
<reference key="1">
    <citation type="journal article" date="2002" name="Science">
        <title>50 million years of genomic stasis in endosymbiotic bacteria.</title>
        <authorList>
            <person name="Tamas I."/>
            <person name="Klasson L."/>
            <person name="Canbaeck B."/>
            <person name="Naeslund A.K."/>
            <person name="Eriksson A.-S."/>
            <person name="Wernegreen J.J."/>
            <person name="Sandstroem J.P."/>
            <person name="Moran N.A."/>
            <person name="Andersson S.G.E."/>
        </authorList>
    </citation>
    <scope>NUCLEOTIDE SEQUENCE [LARGE SCALE GENOMIC DNA]</scope>
    <source>
        <strain>Sg</strain>
    </source>
</reference>
<evidence type="ECO:0000250" key="1"/>
<evidence type="ECO:0000255" key="2"/>
<evidence type="ECO:0000305" key="3"/>